<organism>
    <name type="scientific">Pseudoalteromonas translucida (strain TAC 125)</name>
    <dbReference type="NCBI Taxonomy" id="326442"/>
    <lineage>
        <taxon>Bacteria</taxon>
        <taxon>Pseudomonadati</taxon>
        <taxon>Pseudomonadota</taxon>
        <taxon>Gammaproteobacteria</taxon>
        <taxon>Alteromonadales</taxon>
        <taxon>Pseudoalteromonadaceae</taxon>
        <taxon>Pseudoalteromonas</taxon>
    </lineage>
</organism>
<reference key="1">
    <citation type="journal article" date="2005" name="Genome Res.">
        <title>Coping with cold: the genome of the versatile marine Antarctica bacterium Pseudoalteromonas haloplanktis TAC125.</title>
        <authorList>
            <person name="Medigue C."/>
            <person name="Krin E."/>
            <person name="Pascal G."/>
            <person name="Barbe V."/>
            <person name="Bernsel A."/>
            <person name="Bertin P.N."/>
            <person name="Cheung F."/>
            <person name="Cruveiller S."/>
            <person name="D'Amico S."/>
            <person name="Duilio A."/>
            <person name="Fang G."/>
            <person name="Feller G."/>
            <person name="Ho C."/>
            <person name="Mangenot S."/>
            <person name="Marino G."/>
            <person name="Nilsson J."/>
            <person name="Parrilli E."/>
            <person name="Rocha E.P.C."/>
            <person name="Rouy Z."/>
            <person name="Sekowska A."/>
            <person name="Tutino M.L."/>
            <person name="Vallenet D."/>
            <person name="von Heijne G."/>
            <person name="Danchin A."/>
        </authorList>
    </citation>
    <scope>NUCLEOTIDE SEQUENCE [LARGE SCALE GENOMIC DNA]</scope>
    <source>
        <strain>TAC 125</strain>
    </source>
</reference>
<protein>
    <recommendedName>
        <fullName evidence="1">Gamma-glutamyl phosphate reductase</fullName>
        <shortName evidence="1">GPR</shortName>
        <ecNumber evidence="1">1.2.1.41</ecNumber>
    </recommendedName>
    <alternativeName>
        <fullName evidence="1">Glutamate-5-semialdehyde dehydrogenase</fullName>
    </alternativeName>
    <alternativeName>
        <fullName evidence="1">Glutamyl-gamma-semialdehyde dehydrogenase</fullName>
        <shortName evidence="1">GSA dehydrogenase</shortName>
    </alternativeName>
</protein>
<sequence>MSLITDISRQAAKAAHQLALLDTETKNKVLLDMAAALRAEKAFIIKENESDLAAARDNNLAAAMVDRLTLNDERVEAMAEGIEVIVSLDDPVGQLRDITERPNGIKIRKMRVPLGVVCMIYEARPNVTADAGALCFKSGNSVILRGGKEALKSSQAIASVMHSVLAKHNLPEALISVIPDPDRGLLMELMQQRDSIDLIIPRGGEGLINFVTENSTIPVIQHFKGVCHLYVDKDADLEVAINLLLNGKTQRTGVCNALEGLVVHQDIANEFLNLCAVVLRQEGVKINADSQAATYFDNATVLGDDEFGEEYLDLEIAIRVVPSFAAAVEHIAQFGSHHTEVICTKNAATAELFQRSVDASVVTVNASSRFSDGSQLGLGAEIGIATSKLHAYGPMGLESLTTEKYLVNGDGQIRE</sequence>
<dbReference type="EC" id="1.2.1.41" evidence="1"/>
<dbReference type="EMBL" id="CR954246">
    <property type="protein sequence ID" value="CAI85379.1"/>
    <property type="molecule type" value="Genomic_DNA"/>
</dbReference>
<dbReference type="SMR" id="Q3IEY7"/>
<dbReference type="STRING" id="326442.PSHAa0280"/>
<dbReference type="KEGG" id="pha:PSHAa0280"/>
<dbReference type="PATRIC" id="fig|326442.8.peg.266"/>
<dbReference type="eggNOG" id="COG0014">
    <property type="taxonomic scope" value="Bacteria"/>
</dbReference>
<dbReference type="HOGENOM" id="CLU_030231_0_0_6"/>
<dbReference type="BioCyc" id="PHAL326442:PSHA_RS01385-MONOMER"/>
<dbReference type="UniPathway" id="UPA00098">
    <property type="reaction ID" value="UER00360"/>
</dbReference>
<dbReference type="Proteomes" id="UP000006843">
    <property type="component" value="Chromosome I"/>
</dbReference>
<dbReference type="GO" id="GO:0005737">
    <property type="term" value="C:cytoplasm"/>
    <property type="evidence" value="ECO:0007669"/>
    <property type="project" value="UniProtKB-SubCell"/>
</dbReference>
<dbReference type="GO" id="GO:0004350">
    <property type="term" value="F:glutamate-5-semialdehyde dehydrogenase activity"/>
    <property type="evidence" value="ECO:0007669"/>
    <property type="project" value="UniProtKB-UniRule"/>
</dbReference>
<dbReference type="GO" id="GO:0050661">
    <property type="term" value="F:NADP binding"/>
    <property type="evidence" value="ECO:0007669"/>
    <property type="project" value="InterPro"/>
</dbReference>
<dbReference type="GO" id="GO:0055129">
    <property type="term" value="P:L-proline biosynthetic process"/>
    <property type="evidence" value="ECO:0007669"/>
    <property type="project" value="UniProtKB-UniRule"/>
</dbReference>
<dbReference type="CDD" id="cd07079">
    <property type="entry name" value="ALDH_F18-19_ProA-GPR"/>
    <property type="match status" value="1"/>
</dbReference>
<dbReference type="Gene3D" id="3.40.605.10">
    <property type="entry name" value="Aldehyde Dehydrogenase, Chain A, domain 1"/>
    <property type="match status" value="1"/>
</dbReference>
<dbReference type="Gene3D" id="3.40.309.10">
    <property type="entry name" value="Aldehyde Dehydrogenase, Chain A, domain 2"/>
    <property type="match status" value="1"/>
</dbReference>
<dbReference type="HAMAP" id="MF_00412">
    <property type="entry name" value="ProA"/>
    <property type="match status" value="1"/>
</dbReference>
<dbReference type="InterPro" id="IPR016161">
    <property type="entry name" value="Ald_DH/histidinol_DH"/>
</dbReference>
<dbReference type="InterPro" id="IPR016163">
    <property type="entry name" value="Ald_DH_C"/>
</dbReference>
<dbReference type="InterPro" id="IPR016162">
    <property type="entry name" value="Ald_DH_N"/>
</dbReference>
<dbReference type="InterPro" id="IPR015590">
    <property type="entry name" value="Aldehyde_DH_dom"/>
</dbReference>
<dbReference type="InterPro" id="IPR020593">
    <property type="entry name" value="G-glutamylP_reductase_CS"/>
</dbReference>
<dbReference type="InterPro" id="IPR012134">
    <property type="entry name" value="Glu-5-SA_DH"/>
</dbReference>
<dbReference type="InterPro" id="IPR000965">
    <property type="entry name" value="GPR_dom"/>
</dbReference>
<dbReference type="NCBIfam" id="NF001221">
    <property type="entry name" value="PRK00197.1"/>
    <property type="match status" value="1"/>
</dbReference>
<dbReference type="NCBIfam" id="TIGR00407">
    <property type="entry name" value="proA"/>
    <property type="match status" value="1"/>
</dbReference>
<dbReference type="PANTHER" id="PTHR11063:SF8">
    <property type="entry name" value="DELTA-1-PYRROLINE-5-CARBOXYLATE SYNTHASE"/>
    <property type="match status" value="1"/>
</dbReference>
<dbReference type="PANTHER" id="PTHR11063">
    <property type="entry name" value="GLUTAMATE SEMIALDEHYDE DEHYDROGENASE"/>
    <property type="match status" value="1"/>
</dbReference>
<dbReference type="Pfam" id="PF00171">
    <property type="entry name" value="Aldedh"/>
    <property type="match status" value="1"/>
</dbReference>
<dbReference type="PIRSF" id="PIRSF000151">
    <property type="entry name" value="GPR"/>
    <property type="match status" value="1"/>
</dbReference>
<dbReference type="SUPFAM" id="SSF53720">
    <property type="entry name" value="ALDH-like"/>
    <property type="match status" value="1"/>
</dbReference>
<dbReference type="PROSITE" id="PS01223">
    <property type="entry name" value="PROA"/>
    <property type="match status" value="1"/>
</dbReference>
<feature type="chain" id="PRO_0000230013" description="Gamma-glutamyl phosphate reductase">
    <location>
        <begin position="1"/>
        <end position="415"/>
    </location>
</feature>
<proteinExistence type="inferred from homology"/>
<comment type="function">
    <text evidence="1">Catalyzes the NADPH-dependent reduction of L-glutamate 5-phosphate into L-glutamate 5-semialdehyde and phosphate. The product spontaneously undergoes cyclization to form 1-pyrroline-5-carboxylate.</text>
</comment>
<comment type="catalytic activity">
    <reaction evidence="1">
        <text>L-glutamate 5-semialdehyde + phosphate + NADP(+) = L-glutamyl 5-phosphate + NADPH + H(+)</text>
        <dbReference type="Rhea" id="RHEA:19541"/>
        <dbReference type="ChEBI" id="CHEBI:15378"/>
        <dbReference type="ChEBI" id="CHEBI:43474"/>
        <dbReference type="ChEBI" id="CHEBI:57783"/>
        <dbReference type="ChEBI" id="CHEBI:58066"/>
        <dbReference type="ChEBI" id="CHEBI:58274"/>
        <dbReference type="ChEBI" id="CHEBI:58349"/>
        <dbReference type="EC" id="1.2.1.41"/>
    </reaction>
</comment>
<comment type="pathway">
    <text evidence="1">Amino-acid biosynthesis; L-proline biosynthesis; L-glutamate 5-semialdehyde from L-glutamate: step 2/2.</text>
</comment>
<comment type="subcellular location">
    <subcellularLocation>
        <location evidence="1">Cytoplasm</location>
    </subcellularLocation>
</comment>
<comment type="similarity">
    <text evidence="1">Belongs to the gamma-glutamyl phosphate reductase family.</text>
</comment>
<evidence type="ECO:0000255" key="1">
    <source>
        <dbReference type="HAMAP-Rule" id="MF_00412"/>
    </source>
</evidence>
<name>PROA_PSET1</name>
<gene>
    <name evidence="1" type="primary">proA</name>
    <name type="ordered locus">PSHAa0280</name>
</gene>
<keyword id="KW-0028">Amino-acid biosynthesis</keyword>
<keyword id="KW-0963">Cytoplasm</keyword>
<keyword id="KW-0521">NADP</keyword>
<keyword id="KW-0560">Oxidoreductase</keyword>
<keyword id="KW-0641">Proline biosynthesis</keyword>
<keyword id="KW-1185">Reference proteome</keyword>
<accession>Q3IEY7</accession>